<proteinExistence type="inferred from homology"/>
<dbReference type="EMBL" id="AB100272">
    <property type="protein sequence ID" value="BAC55521.1"/>
    <property type="molecule type" value="Genomic_DNA"/>
</dbReference>
<dbReference type="EMBL" id="AB100273">
    <property type="protein sequence ID" value="BAC55522.1"/>
    <property type="molecule type" value="Genomic_DNA"/>
</dbReference>
<dbReference type="EMBL" id="AJ000450">
    <property type="protein sequence ID" value="CAA04094.1"/>
    <property type="molecule type" value="Genomic_DNA"/>
</dbReference>
<dbReference type="EMBL" id="AJ000451">
    <property type="protein sequence ID" value="CAA04095.1"/>
    <property type="molecule type" value="Genomic_DNA"/>
</dbReference>
<dbReference type="GO" id="GO:0005743">
    <property type="term" value="C:mitochondrial inner membrane"/>
    <property type="evidence" value="ECO:0007669"/>
    <property type="project" value="UniProtKB-SubCell"/>
</dbReference>
<dbReference type="GO" id="GO:0045275">
    <property type="term" value="C:respiratory chain complex III"/>
    <property type="evidence" value="ECO:0007669"/>
    <property type="project" value="InterPro"/>
</dbReference>
<dbReference type="GO" id="GO:0046872">
    <property type="term" value="F:metal ion binding"/>
    <property type="evidence" value="ECO:0007669"/>
    <property type="project" value="UniProtKB-KW"/>
</dbReference>
<dbReference type="GO" id="GO:0008121">
    <property type="term" value="F:ubiquinol-cytochrome-c reductase activity"/>
    <property type="evidence" value="ECO:0007669"/>
    <property type="project" value="InterPro"/>
</dbReference>
<dbReference type="GO" id="GO:0006122">
    <property type="term" value="P:mitochondrial electron transport, ubiquinol to cytochrome c"/>
    <property type="evidence" value="ECO:0007669"/>
    <property type="project" value="TreeGrafter"/>
</dbReference>
<dbReference type="CDD" id="cd00290">
    <property type="entry name" value="cytochrome_b_C"/>
    <property type="match status" value="1"/>
</dbReference>
<dbReference type="CDD" id="cd00284">
    <property type="entry name" value="Cytochrome_b_N"/>
    <property type="match status" value="1"/>
</dbReference>
<dbReference type="FunFam" id="1.20.810.10:FF:000002">
    <property type="entry name" value="Cytochrome b"/>
    <property type="match status" value="1"/>
</dbReference>
<dbReference type="Gene3D" id="1.20.810.10">
    <property type="entry name" value="Cytochrome Bc1 Complex, Chain C"/>
    <property type="match status" value="1"/>
</dbReference>
<dbReference type="InterPro" id="IPR005798">
    <property type="entry name" value="Cyt_b/b6_C"/>
</dbReference>
<dbReference type="InterPro" id="IPR036150">
    <property type="entry name" value="Cyt_b/b6_C_sf"/>
</dbReference>
<dbReference type="InterPro" id="IPR005797">
    <property type="entry name" value="Cyt_b/b6_N"/>
</dbReference>
<dbReference type="InterPro" id="IPR027387">
    <property type="entry name" value="Cytb/b6-like_sf"/>
</dbReference>
<dbReference type="InterPro" id="IPR030689">
    <property type="entry name" value="Cytochrome_b"/>
</dbReference>
<dbReference type="InterPro" id="IPR048260">
    <property type="entry name" value="Cytochrome_b_C_euk/bac"/>
</dbReference>
<dbReference type="InterPro" id="IPR048259">
    <property type="entry name" value="Cytochrome_b_N_euk/bac"/>
</dbReference>
<dbReference type="InterPro" id="IPR016174">
    <property type="entry name" value="Di-haem_cyt_TM"/>
</dbReference>
<dbReference type="PANTHER" id="PTHR19271">
    <property type="entry name" value="CYTOCHROME B"/>
    <property type="match status" value="1"/>
</dbReference>
<dbReference type="PANTHER" id="PTHR19271:SF16">
    <property type="entry name" value="CYTOCHROME B"/>
    <property type="match status" value="1"/>
</dbReference>
<dbReference type="Pfam" id="PF00032">
    <property type="entry name" value="Cytochrom_B_C"/>
    <property type="match status" value="1"/>
</dbReference>
<dbReference type="Pfam" id="PF00033">
    <property type="entry name" value="Cytochrome_B"/>
    <property type="match status" value="1"/>
</dbReference>
<dbReference type="PIRSF" id="PIRSF038885">
    <property type="entry name" value="COB"/>
    <property type="match status" value="1"/>
</dbReference>
<dbReference type="SUPFAM" id="SSF81648">
    <property type="entry name" value="a domain/subunit of cytochrome bc1 complex (Ubiquinol-cytochrome c reductase)"/>
    <property type="match status" value="1"/>
</dbReference>
<dbReference type="SUPFAM" id="SSF81342">
    <property type="entry name" value="Transmembrane di-heme cytochromes"/>
    <property type="match status" value="1"/>
</dbReference>
<dbReference type="PROSITE" id="PS51003">
    <property type="entry name" value="CYTB_CTER"/>
    <property type="match status" value="1"/>
</dbReference>
<dbReference type="PROSITE" id="PS51002">
    <property type="entry name" value="CYTB_NTER"/>
    <property type="match status" value="1"/>
</dbReference>
<organism>
    <name type="scientific">Sorex monticolus</name>
    <name type="common">Dusky shrew</name>
    <name type="synonym">Montane shrew</name>
    <dbReference type="NCBI Taxonomy" id="62903"/>
    <lineage>
        <taxon>Eukaryota</taxon>
        <taxon>Metazoa</taxon>
        <taxon>Chordata</taxon>
        <taxon>Craniata</taxon>
        <taxon>Vertebrata</taxon>
        <taxon>Euteleostomi</taxon>
        <taxon>Mammalia</taxon>
        <taxon>Eutheria</taxon>
        <taxon>Laurasiatheria</taxon>
        <taxon>Eulipotyphla</taxon>
        <taxon>Soricidae</taxon>
        <taxon>Soricinae</taxon>
        <taxon>Sorex</taxon>
    </lineage>
</organism>
<feature type="chain" id="PRO_0000061571" description="Cytochrome b">
    <location>
        <begin position="1"/>
        <end position="379"/>
    </location>
</feature>
<feature type="transmembrane region" description="Helical" evidence="2">
    <location>
        <begin position="33"/>
        <end position="53"/>
    </location>
</feature>
<feature type="transmembrane region" description="Helical" evidence="2">
    <location>
        <begin position="77"/>
        <end position="98"/>
    </location>
</feature>
<feature type="transmembrane region" description="Helical" evidence="2">
    <location>
        <begin position="113"/>
        <end position="133"/>
    </location>
</feature>
<feature type="transmembrane region" description="Helical" evidence="2">
    <location>
        <begin position="178"/>
        <end position="198"/>
    </location>
</feature>
<feature type="transmembrane region" description="Helical" evidence="2">
    <location>
        <begin position="226"/>
        <end position="246"/>
    </location>
</feature>
<feature type="transmembrane region" description="Helical" evidence="2">
    <location>
        <begin position="288"/>
        <end position="308"/>
    </location>
</feature>
<feature type="transmembrane region" description="Helical" evidence="2">
    <location>
        <begin position="320"/>
        <end position="340"/>
    </location>
</feature>
<feature type="transmembrane region" description="Helical" evidence="2">
    <location>
        <begin position="347"/>
        <end position="367"/>
    </location>
</feature>
<feature type="binding site" description="axial binding residue" evidence="2">
    <location>
        <position position="83"/>
    </location>
    <ligand>
        <name>heme b</name>
        <dbReference type="ChEBI" id="CHEBI:60344"/>
        <label>b562</label>
    </ligand>
    <ligandPart>
        <name>Fe</name>
        <dbReference type="ChEBI" id="CHEBI:18248"/>
    </ligandPart>
</feature>
<feature type="binding site" description="axial binding residue" evidence="2">
    <location>
        <position position="97"/>
    </location>
    <ligand>
        <name>heme b</name>
        <dbReference type="ChEBI" id="CHEBI:60344"/>
        <label>b566</label>
    </ligand>
    <ligandPart>
        <name>Fe</name>
        <dbReference type="ChEBI" id="CHEBI:18248"/>
    </ligandPart>
</feature>
<feature type="binding site" description="axial binding residue" evidence="2">
    <location>
        <position position="182"/>
    </location>
    <ligand>
        <name>heme b</name>
        <dbReference type="ChEBI" id="CHEBI:60344"/>
        <label>b562</label>
    </ligand>
    <ligandPart>
        <name>Fe</name>
        <dbReference type="ChEBI" id="CHEBI:18248"/>
    </ligandPart>
</feature>
<feature type="binding site" description="axial binding residue" evidence="2">
    <location>
        <position position="196"/>
    </location>
    <ligand>
        <name>heme b</name>
        <dbReference type="ChEBI" id="CHEBI:60344"/>
        <label>b566</label>
    </ligand>
    <ligandPart>
        <name>Fe</name>
        <dbReference type="ChEBI" id="CHEBI:18248"/>
    </ligandPart>
</feature>
<feature type="binding site" evidence="2">
    <location>
        <position position="201"/>
    </location>
    <ligand>
        <name>a ubiquinone</name>
        <dbReference type="ChEBI" id="CHEBI:16389"/>
    </ligand>
</feature>
<feature type="sequence variant" description="In strain: Isolate SAS10.">
    <original>V</original>
    <variation>I</variation>
    <location>
        <position position="238"/>
    </location>
</feature>
<feature type="sequence conflict" description="In Ref. 2; CAA04094/CAA04095." evidence="5" ref="2">
    <original>N</original>
    <variation>Y</variation>
    <location>
        <position position="85"/>
    </location>
</feature>
<feature type="sequence conflict" description="In Ref. 2; CAA04094/CAA04095." evidence="5" ref="2">
    <original>F</original>
    <variation>L</variation>
    <location>
        <position position="303"/>
    </location>
</feature>
<sequence>MTNLRKTHPLMKIINSSFIDLPAPSNISSWWNFGSLLGVCLIVQILTGLFLAMHYTSDTMTAFSSVTHICRDVNYGWLIRYLHANGASMFFICLFLHVGRGLYYGSYMFLETWNIGVLLLFAVMATAFMGYVLPWGQMSFWGATVITNLLSAIPYIGSDLVEWIWGGFSVDKATLTRFFAFHFILPFIIAALAGVHLLFLHETGSNNPSGLCSDADKIPFHPYYTIKDILGVLLLILVLTSLVLFSPDLLGDPDNYTPANPLNTPPHIKPEXYFLFAYAILRSIPNKLGGVLALVLSILVLAFIPFLHTSKQRSMMFRPFSQCLFWILVADLLTLTWIGGQPVEHPFIIIGQLASILYFLLILVLMPITSLFENNLLKW</sequence>
<gene>
    <name type="primary">MT-CYB</name>
    <name type="synonym">COB</name>
    <name type="synonym">CYTB</name>
    <name type="synonym">MTCYB</name>
</gene>
<keyword id="KW-0249">Electron transport</keyword>
<keyword id="KW-0349">Heme</keyword>
<keyword id="KW-0408">Iron</keyword>
<keyword id="KW-0472">Membrane</keyword>
<keyword id="KW-0479">Metal-binding</keyword>
<keyword id="KW-0496">Mitochondrion</keyword>
<keyword id="KW-0999">Mitochondrion inner membrane</keyword>
<keyword id="KW-0679">Respiratory chain</keyword>
<keyword id="KW-0812">Transmembrane</keyword>
<keyword id="KW-1133">Transmembrane helix</keyword>
<keyword id="KW-0813">Transport</keyword>
<keyword id="KW-0830">Ubiquinone</keyword>
<comment type="function">
    <text evidence="2">Component of the ubiquinol-cytochrome c reductase complex (complex III or cytochrome b-c1 complex) that is part of the mitochondrial respiratory chain. The b-c1 complex mediates electron transfer from ubiquinol to cytochrome c. Contributes to the generation of a proton gradient across the mitochondrial membrane that is then used for ATP synthesis.</text>
</comment>
<comment type="cofactor">
    <cofactor evidence="2">
        <name>heme b</name>
        <dbReference type="ChEBI" id="CHEBI:60344"/>
    </cofactor>
    <text evidence="2">Binds 2 heme b groups non-covalently.</text>
</comment>
<comment type="subunit">
    <text evidence="2">The cytochrome bc1 complex contains 11 subunits: 3 respiratory subunits (MT-CYB, CYC1 and UQCRFS1), 2 core proteins (UQCRC1 and UQCRC2) and 6 low-molecular weight proteins (UQCRH/QCR6, UQCRB/QCR7, UQCRQ/QCR8, UQCR10/QCR9, UQCR11/QCR10 and a cleavage product of UQCRFS1). This cytochrome bc1 complex then forms a dimer.</text>
</comment>
<comment type="subcellular location">
    <subcellularLocation>
        <location evidence="2">Mitochondrion inner membrane</location>
        <topology evidence="2">Multi-pass membrane protein</topology>
    </subcellularLocation>
</comment>
<comment type="miscellaneous">
    <text evidence="1">Heme 1 (or BL or b562) is low-potential and absorbs at about 562 nm, and heme 2 (or BH or b566) is high-potential and absorbs at about 566 nm.</text>
</comment>
<comment type="similarity">
    <text evidence="3 4">Belongs to the cytochrome b family.</text>
</comment>
<comment type="caution">
    <text evidence="2">The full-length protein contains only eight transmembrane helices, not nine as predicted by bioinformatics tools.</text>
</comment>
<protein>
    <recommendedName>
        <fullName>Cytochrome b</fullName>
    </recommendedName>
    <alternativeName>
        <fullName>Complex III subunit 3</fullName>
    </alternativeName>
    <alternativeName>
        <fullName>Complex III subunit III</fullName>
    </alternativeName>
    <alternativeName>
        <fullName>Cytochrome b-c1 complex subunit 3</fullName>
    </alternativeName>
    <alternativeName>
        <fullName>Ubiquinol-cytochrome-c reductase complex cytochrome b subunit</fullName>
    </alternativeName>
</protein>
<accession>O79969</accession>
<accession>Q85UD7</accession>
<accession>Q85UD8</accession>
<reference key="1">
    <citation type="journal article" date="2003" name="Mol. Phylogenet. Evol.">
        <title>Molecular phylogenetic relationships of moles, shrew moles, and desmans from the new and old worlds.</title>
        <authorList>
            <person name="Shinohara A."/>
            <person name="Campbell K.L."/>
            <person name="Suzuki H."/>
        </authorList>
    </citation>
    <scope>NUCLEOTIDE SEQUENCE [GENOMIC DNA]</scope>
    <source>
        <strain>Isolate SAS10</strain>
        <strain>Isolate SAS9</strain>
    </source>
</reference>
<reference key="2">
    <citation type="journal article" date="1999" name="Mol. Phylogenet. Evol.">
        <title>Molecular phylogeny and evolution of Sorex shrews (Soricidae: Insectivora) inferred from mitochondrial DNA sequence data.</title>
        <authorList>
            <person name="Fumagalli L."/>
            <person name="Taberlet P."/>
            <person name="Stewart D.T."/>
            <person name="Gielly L."/>
            <person name="Hausser J."/>
            <person name="Vogel P."/>
        </authorList>
    </citation>
    <scope>NUCLEOTIDE SEQUENCE [GENOMIC DNA] OF 44-379</scope>
</reference>
<evidence type="ECO:0000250" key="1"/>
<evidence type="ECO:0000250" key="2">
    <source>
        <dbReference type="UniProtKB" id="P00157"/>
    </source>
</evidence>
<evidence type="ECO:0000255" key="3">
    <source>
        <dbReference type="PROSITE-ProRule" id="PRU00967"/>
    </source>
</evidence>
<evidence type="ECO:0000255" key="4">
    <source>
        <dbReference type="PROSITE-ProRule" id="PRU00968"/>
    </source>
</evidence>
<evidence type="ECO:0000305" key="5"/>
<name>CYB_SORMO</name>
<geneLocation type="mitochondrion"/>